<feature type="chain" id="PRO_1000022586" description="Homoserine kinase">
    <location>
        <begin position="1"/>
        <end position="316"/>
    </location>
</feature>
<reference key="1">
    <citation type="submission" date="2005-08" db="EMBL/GenBank/DDBJ databases">
        <title>Complete sequence of chromosome 1 of Nitrosospira multiformis ATCC 25196.</title>
        <authorList>
            <person name="Copeland A."/>
            <person name="Lucas S."/>
            <person name="Lapidus A."/>
            <person name="Barry K."/>
            <person name="Detter J.C."/>
            <person name="Glavina T."/>
            <person name="Hammon N."/>
            <person name="Israni S."/>
            <person name="Pitluck S."/>
            <person name="Chain P."/>
            <person name="Malfatti S."/>
            <person name="Shin M."/>
            <person name="Vergez L."/>
            <person name="Schmutz J."/>
            <person name="Larimer F."/>
            <person name="Land M."/>
            <person name="Hauser L."/>
            <person name="Kyrpides N."/>
            <person name="Lykidis A."/>
            <person name="Richardson P."/>
        </authorList>
    </citation>
    <scope>NUCLEOTIDE SEQUENCE [LARGE SCALE GENOMIC DNA]</scope>
    <source>
        <strain>ATCC 25196 / NCIMB 11849 / C 71</strain>
    </source>
</reference>
<gene>
    <name evidence="1" type="primary">thrB</name>
    <name type="ordered locus">Nmul_A0565</name>
</gene>
<comment type="catalytic activity">
    <reaction evidence="1">
        <text>L-homoserine + ATP = O-phospho-L-homoserine + ADP + H(+)</text>
        <dbReference type="Rhea" id="RHEA:13985"/>
        <dbReference type="ChEBI" id="CHEBI:15378"/>
        <dbReference type="ChEBI" id="CHEBI:30616"/>
        <dbReference type="ChEBI" id="CHEBI:57476"/>
        <dbReference type="ChEBI" id="CHEBI:57590"/>
        <dbReference type="ChEBI" id="CHEBI:456216"/>
        <dbReference type="EC" id="2.7.1.39"/>
    </reaction>
</comment>
<comment type="pathway">
    <text evidence="1">Amino-acid biosynthesis; L-threonine biosynthesis; L-threonine from L-aspartate: step 4/5.</text>
</comment>
<comment type="similarity">
    <text evidence="1">Belongs to the pseudomonas-type ThrB family.</text>
</comment>
<protein>
    <recommendedName>
        <fullName evidence="1">Homoserine kinase</fullName>
        <shortName evidence="1">HK</shortName>
        <shortName evidence="1">HSK</shortName>
        <ecNumber evidence="1">2.7.1.39</ecNumber>
    </recommendedName>
</protein>
<keyword id="KW-0028">Amino-acid biosynthesis</keyword>
<keyword id="KW-0067">ATP-binding</keyword>
<keyword id="KW-0418">Kinase</keyword>
<keyword id="KW-0547">Nucleotide-binding</keyword>
<keyword id="KW-1185">Reference proteome</keyword>
<keyword id="KW-0791">Threonine biosynthesis</keyword>
<keyword id="KW-0808">Transferase</keyword>
<dbReference type="EC" id="2.7.1.39" evidence="1"/>
<dbReference type="EMBL" id="CP000103">
    <property type="protein sequence ID" value="ABB73873.1"/>
    <property type="molecule type" value="Genomic_DNA"/>
</dbReference>
<dbReference type="RefSeq" id="WP_011379927.1">
    <property type="nucleotide sequence ID" value="NC_007614.1"/>
</dbReference>
<dbReference type="SMR" id="Q2YBJ8"/>
<dbReference type="STRING" id="323848.Nmul_A0565"/>
<dbReference type="KEGG" id="nmu:Nmul_A0565"/>
<dbReference type="eggNOG" id="COG2334">
    <property type="taxonomic scope" value="Bacteria"/>
</dbReference>
<dbReference type="HOGENOM" id="CLU_053300_0_0_4"/>
<dbReference type="OrthoDB" id="9777460at2"/>
<dbReference type="UniPathway" id="UPA00050">
    <property type="reaction ID" value="UER00064"/>
</dbReference>
<dbReference type="Proteomes" id="UP000002718">
    <property type="component" value="Chromosome"/>
</dbReference>
<dbReference type="GO" id="GO:0005524">
    <property type="term" value="F:ATP binding"/>
    <property type="evidence" value="ECO:0007669"/>
    <property type="project" value="UniProtKB-KW"/>
</dbReference>
<dbReference type="GO" id="GO:0004413">
    <property type="term" value="F:homoserine kinase activity"/>
    <property type="evidence" value="ECO:0007669"/>
    <property type="project" value="UniProtKB-UniRule"/>
</dbReference>
<dbReference type="GO" id="GO:0009088">
    <property type="term" value="P:threonine biosynthetic process"/>
    <property type="evidence" value="ECO:0007669"/>
    <property type="project" value="UniProtKB-UniRule"/>
</dbReference>
<dbReference type="CDD" id="cd05153">
    <property type="entry name" value="HomoserineK_II"/>
    <property type="match status" value="1"/>
</dbReference>
<dbReference type="Gene3D" id="3.90.1200.10">
    <property type="match status" value="1"/>
</dbReference>
<dbReference type="Gene3D" id="3.30.200.20">
    <property type="entry name" value="Phosphorylase Kinase, domain 1"/>
    <property type="match status" value="1"/>
</dbReference>
<dbReference type="HAMAP" id="MF_00301">
    <property type="entry name" value="Homoser_kinase_2"/>
    <property type="match status" value="1"/>
</dbReference>
<dbReference type="InterPro" id="IPR002575">
    <property type="entry name" value="Aminoglycoside_PTrfase"/>
</dbReference>
<dbReference type="InterPro" id="IPR005280">
    <property type="entry name" value="Homoserine_kinase_II"/>
</dbReference>
<dbReference type="InterPro" id="IPR011009">
    <property type="entry name" value="Kinase-like_dom_sf"/>
</dbReference>
<dbReference type="InterPro" id="IPR050249">
    <property type="entry name" value="Pseudomonas-type_ThrB"/>
</dbReference>
<dbReference type="NCBIfam" id="NF003558">
    <property type="entry name" value="PRK05231.1"/>
    <property type="match status" value="1"/>
</dbReference>
<dbReference type="NCBIfam" id="TIGR00938">
    <property type="entry name" value="thrB_alt"/>
    <property type="match status" value="1"/>
</dbReference>
<dbReference type="PANTHER" id="PTHR21064:SF6">
    <property type="entry name" value="AMINOGLYCOSIDE PHOSPHOTRANSFERASE DOMAIN-CONTAINING PROTEIN"/>
    <property type="match status" value="1"/>
</dbReference>
<dbReference type="PANTHER" id="PTHR21064">
    <property type="entry name" value="AMINOGLYCOSIDE PHOSPHOTRANSFERASE DOMAIN-CONTAINING PROTEIN-RELATED"/>
    <property type="match status" value="1"/>
</dbReference>
<dbReference type="Pfam" id="PF01636">
    <property type="entry name" value="APH"/>
    <property type="match status" value="1"/>
</dbReference>
<dbReference type="SUPFAM" id="SSF56112">
    <property type="entry name" value="Protein kinase-like (PK-like)"/>
    <property type="match status" value="1"/>
</dbReference>
<accession>Q2YBJ8</accession>
<organism>
    <name type="scientific">Nitrosospira multiformis (strain ATCC 25196 / NCIMB 11849 / C 71)</name>
    <dbReference type="NCBI Taxonomy" id="323848"/>
    <lineage>
        <taxon>Bacteria</taxon>
        <taxon>Pseudomonadati</taxon>
        <taxon>Pseudomonadota</taxon>
        <taxon>Betaproteobacteria</taxon>
        <taxon>Nitrosomonadales</taxon>
        <taxon>Nitrosomonadaceae</taxon>
        <taxon>Nitrosospira</taxon>
    </lineage>
</organism>
<proteinExistence type="inferred from homology"/>
<name>KHSE_NITMU</name>
<evidence type="ECO:0000255" key="1">
    <source>
        <dbReference type="HAMAP-Rule" id="MF_00301"/>
    </source>
</evidence>
<sequence length="316" mass="35570">MSVFTIVTHEQLSAWLRNYSIGKLVNLQGISSGIENTNYFVTTSHGKYVLTLFEKLTSAELPYYLNLMAYLARHGLPCPSPVADLANKFLGELNGKPASIVTCLPGKSQESPTATHCAEVGELLANMHLSGLSYPEKMENLRGPRWWKAAAQEVMPFLSEDEAAILGEELRFQSSHRTESLPRGVIHADLFRDNVLFKDGAMGGVIDFYFACNDVLLYDLAITANDWCLNENAELDPERTLSLLEAYHRTRPLLEIERDAWPVMLRAGALRFWLSRLQDYHLPRAGELTHVKDPAHFMRILQSHAAARSKLAEVWI</sequence>